<gene>
    <name evidence="3" type="primary">CADS</name>
</gene>
<protein>
    <recommendedName>
        <fullName evidence="3">Tau-cadinol synthase</fullName>
        <shortName evidence="3">LaCADS</shortName>
        <ecNumber evidence="2">4.2.3.173</ecNumber>
    </recommendedName>
    <alternativeName>
        <fullName evidence="4">(+)-gamma-cadinene synthase</fullName>
    </alternativeName>
    <alternativeName>
        <fullName evidence="4">Gamma-cadinene synthase</fullName>
        <ecNumber evidence="2">4.2.3.92</ecNumber>
    </alternativeName>
</protein>
<sequence length="555" mass="64576">MATSAVVNCLGGVRPHTIRYEPNMWTHTFSNFSIDEQVQGEYAEEIEALKQEVRSMLTAATTCKEQLILIDTLERLGLSYHFETEIEQKLKEIILHINREEDASGGDCDLYTTSLGFRVIRQHQYHISCGVFEKYLDKDGKFEESLSSDTEGILSLYEAAHVRFRDETLLQEAARFSRHHLKGMEEVLESPLREKVQRALQHPLHRDIPIFYAHFFISNIYQKDDSRNELLLKLAKSNFMFLQNLYKEELSQLSRWWNKFDLKSKLPYARDRLVEAYIWGVGYHYEPRYAYVRRGLVIGIQIIAIMDDTYDNYATVDEAQLFTEMFERWSMDGIDGVPDYLKIAYHFVVSAFEDYERDAGKLGKQFAAPYFKQTIQQLARAYNQELKWVMGTQSMPSFQDYAKNSEITSCIYIMSASVFHGLESVTQETIDWLKNEPNFAVSTGMIGRYWDDIGSHERESRGGKMLTAVGCYMKQYGVSKKEAVRKFREQVEDLWKDVNKGYTAMTCMPRETAVLFLNYARMCDASYTENNDDGYTDPDFSKRKISALFLDPLVF</sequence>
<feature type="chain" id="PRO_0000452461" description="Tau-cadinol synthase">
    <location>
        <begin position="1"/>
        <end position="555"/>
    </location>
</feature>
<feature type="short sequence motif" description="DDXXD motif" evidence="4">
    <location>
        <begin position="307"/>
        <end position="311"/>
    </location>
</feature>
<feature type="binding site" evidence="1">
    <location>
        <position position="270"/>
    </location>
    <ligand>
        <name>(2E,6E)-farnesyl diphosphate</name>
        <dbReference type="ChEBI" id="CHEBI:175763"/>
    </ligand>
</feature>
<feature type="binding site" evidence="1">
    <location>
        <position position="307"/>
    </location>
    <ligand>
        <name>(2E,6E)-farnesyl diphosphate</name>
        <dbReference type="ChEBI" id="CHEBI:175763"/>
    </ligand>
</feature>
<feature type="binding site" evidence="1">
    <location>
        <position position="307"/>
    </location>
    <ligand>
        <name>Mg(2+)</name>
        <dbReference type="ChEBI" id="CHEBI:18420"/>
        <label>1</label>
    </ligand>
</feature>
<feature type="binding site" evidence="1">
    <location>
        <position position="307"/>
    </location>
    <ligand>
        <name>Mg(2+)</name>
        <dbReference type="ChEBI" id="CHEBI:18420"/>
        <label>2</label>
    </ligand>
</feature>
<feature type="binding site" evidence="1">
    <location>
        <position position="311"/>
    </location>
    <ligand>
        <name>(2E,6E)-farnesyl diphosphate</name>
        <dbReference type="ChEBI" id="CHEBI:175763"/>
    </ligand>
</feature>
<feature type="binding site" evidence="1">
    <location>
        <position position="311"/>
    </location>
    <ligand>
        <name>Mg(2+)</name>
        <dbReference type="ChEBI" id="CHEBI:18420"/>
        <label>1</label>
    </ligand>
</feature>
<feature type="binding site" evidence="1">
    <location>
        <position position="311"/>
    </location>
    <ligand>
        <name>Mg(2+)</name>
        <dbReference type="ChEBI" id="CHEBI:18420"/>
        <label>2</label>
    </ligand>
</feature>
<feature type="binding site" evidence="1">
    <location>
        <position position="448"/>
    </location>
    <ligand>
        <name>(2E,6E)-farnesyl diphosphate</name>
        <dbReference type="ChEBI" id="CHEBI:175763"/>
    </ligand>
</feature>
<feature type="binding site" evidence="1">
    <location>
        <position position="451"/>
    </location>
    <ligand>
        <name>(2E,6E)-farnesyl diphosphate</name>
        <dbReference type="ChEBI" id="CHEBI:175763"/>
    </ligand>
</feature>
<feature type="binding site" evidence="1">
    <location>
        <position position="451"/>
    </location>
    <ligand>
        <name>Mg(2+)</name>
        <dbReference type="ChEBI" id="CHEBI:18420"/>
        <label>3</label>
    </ligand>
</feature>
<feature type="binding site" evidence="1">
    <location>
        <position position="455"/>
    </location>
    <ligand>
        <name>Mg(2+)</name>
        <dbReference type="ChEBI" id="CHEBI:18420"/>
        <label>3</label>
    </ligand>
</feature>
<feature type="binding site" evidence="1">
    <location>
        <position position="459"/>
    </location>
    <ligand>
        <name>Mg(2+)</name>
        <dbReference type="ChEBI" id="CHEBI:18420"/>
        <label>3</label>
    </ligand>
</feature>
<feature type="mutagenesis site" description="No effect on catalytic activity." evidence="2">
    <original>D</original>
    <variation>G</variation>
    <location>
        <position position="532"/>
    </location>
</feature>
<feature type="mutagenesis site" description="No effect on catalytic activity." evidence="2">
    <original>D</original>
    <variation>G</variation>
    <location>
        <position position="533"/>
    </location>
</feature>
<keyword id="KW-0456">Lyase</keyword>
<keyword id="KW-0460">Magnesium</keyword>
<keyword id="KW-0479">Metal-binding</keyword>
<name>CADS_LAVAN</name>
<reference key="1">
    <citation type="journal article" date="2014" name="Plant Mol. Biol.">
        <title>Isolation and functional characterization of a tau-cadinol synthase, a new sesquiterpene synthase from Lavandula angustifolia.</title>
        <authorList>
            <person name="Jullien F."/>
            <person name="Moja S."/>
            <person name="Bony A."/>
            <person name="Legrand S."/>
            <person name="Petit C."/>
            <person name="Benabdelkader T."/>
            <person name="Poirot K."/>
            <person name="Fiorucci S."/>
            <person name="Guitton Y."/>
            <person name="Nicole F."/>
            <person name="Baudino S."/>
            <person name="Magnard J.L."/>
        </authorList>
    </citation>
    <scope>NUCLEOTIDE SEQUENCE [MRNA]</scope>
    <scope>DEVELOPMENTAL STAGE</scope>
    <scope>CATALYTIC ACTIVITY</scope>
    <scope>MUTAGENESIS OF ASP-532 AND ASP-533</scope>
</reference>
<accession>U3LW50</accession>
<proteinExistence type="evidence at protein level"/>
<evidence type="ECO:0000250" key="1">
    <source>
        <dbReference type="UniProtKB" id="Q40577"/>
    </source>
</evidence>
<evidence type="ECO:0000269" key="2">
    <source>
    </source>
</evidence>
<evidence type="ECO:0000303" key="3">
    <source>
    </source>
</evidence>
<evidence type="ECO:0000305" key="4"/>
<comment type="function">
    <text evidence="2">Sesquiterpene synthase that catalyzes the formation of sesquiterpenes and sesquiterpenoid alcohols (PubMed:24078339). Converts farnesyl diphosphate (FPP) to tau-cadinol (PubMed:24078339). Converts FPP to gamma-cadinene (PubMed:24078339). Tau-cadinol is the major product (PubMed:24078339).</text>
</comment>
<comment type="catalytic activity">
    <reaction evidence="2">
        <text>(2E,6E)-farnesyl diphosphate + H2O = tau-cadinol + diphosphate</text>
        <dbReference type="Rhea" id="RHEA:54052"/>
        <dbReference type="ChEBI" id="CHEBI:15377"/>
        <dbReference type="ChEBI" id="CHEBI:33019"/>
        <dbReference type="ChEBI" id="CHEBI:138042"/>
        <dbReference type="ChEBI" id="CHEBI:175763"/>
        <dbReference type="EC" id="4.2.3.173"/>
    </reaction>
    <physiologicalReaction direction="left-to-right" evidence="2">
        <dbReference type="Rhea" id="RHEA:54053"/>
    </physiologicalReaction>
</comment>
<comment type="catalytic activity">
    <reaction evidence="2">
        <text>(2E,6E)-farnesyl diphosphate = (+)-gamma-cadinene + diphosphate</text>
        <dbReference type="Rhea" id="RHEA:31827"/>
        <dbReference type="ChEBI" id="CHEBI:33019"/>
        <dbReference type="ChEBI" id="CHEBI:63205"/>
        <dbReference type="ChEBI" id="CHEBI:175763"/>
        <dbReference type="EC" id="4.2.3.92"/>
    </reaction>
    <physiologicalReaction direction="left-to-right" evidence="2">
        <dbReference type="Rhea" id="RHEA:31828"/>
    </physiologicalReaction>
</comment>
<comment type="cofactor">
    <cofactor evidence="1">
        <name>Mg(2+)</name>
        <dbReference type="ChEBI" id="CHEBI:18420"/>
    </cofactor>
    <text evidence="1">Binds 3 Mg(2+) ions per subunit.</text>
</comment>
<comment type="pathway">
    <text evidence="4">Secondary metabolite biosynthesis; terpenoid biosynthesis.</text>
</comment>
<comment type="domain">
    <text evidence="4">The Asp-Asp-Xaa-Xaa-Asp/Glu (DDXXD/E) motif is important for the catalytic activity, presumably through binding to Mg(2+).</text>
</comment>
<comment type="similarity">
    <text evidence="4">Belongs to the terpene synthase family.</text>
</comment>
<dbReference type="EC" id="4.2.3.173" evidence="2"/>
<dbReference type="EC" id="4.2.3.92" evidence="2"/>
<dbReference type="EMBL" id="JX401282">
    <property type="protein sequence ID" value="AGL98418.1"/>
    <property type="molecule type" value="mRNA"/>
</dbReference>
<dbReference type="SMR" id="U3LW50"/>
<dbReference type="KEGG" id="ag:AGL98418"/>
<dbReference type="BRENDA" id="4.2.3.173">
    <property type="organism ID" value="9723"/>
</dbReference>
<dbReference type="UniPathway" id="UPA00213"/>
<dbReference type="GO" id="GO:0000287">
    <property type="term" value="F:magnesium ion binding"/>
    <property type="evidence" value="ECO:0007669"/>
    <property type="project" value="InterPro"/>
</dbReference>
<dbReference type="GO" id="GO:0010334">
    <property type="term" value="F:sesquiterpene synthase activity"/>
    <property type="evidence" value="ECO:0000314"/>
    <property type="project" value="UniProtKB"/>
</dbReference>
<dbReference type="GO" id="GO:0016102">
    <property type="term" value="P:diterpenoid biosynthetic process"/>
    <property type="evidence" value="ECO:0007669"/>
    <property type="project" value="InterPro"/>
</dbReference>
<dbReference type="GO" id="GO:0051762">
    <property type="term" value="P:sesquiterpene biosynthetic process"/>
    <property type="evidence" value="ECO:0000314"/>
    <property type="project" value="UniProtKB"/>
</dbReference>
<dbReference type="CDD" id="cd00684">
    <property type="entry name" value="Terpene_cyclase_plant_C1"/>
    <property type="match status" value="1"/>
</dbReference>
<dbReference type="FunFam" id="1.10.600.10:FF:000007">
    <property type="entry name" value="Isoprene synthase, chloroplastic"/>
    <property type="match status" value="1"/>
</dbReference>
<dbReference type="FunFam" id="1.50.10.130:FF:000001">
    <property type="entry name" value="Isoprene synthase, chloroplastic"/>
    <property type="match status" value="1"/>
</dbReference>
<dbReference type="Gene3D" id="1.10.600.10">
    <property type="entry name" value="Farnesyl Diphosphate Synthase"/>
    <property type="match status" value="1"/>
</dbReference>
<dbReference type="Gene3D" id="1.50.10.130">
    <property type="entry name" value="Terpene synthase, N-terminal domain"/>
    <property type="match status" value="1"/>
</dbReference>
<dbReference type="InterPro" id="IPR008949">
    <property type="entry name" value="Isoprenoid_synthase_dom_sf"/>
</dbReference>
<dbReference type="InterPro" id="IPR034741">
    <property type="entry name" value="Terpene_cyclase-like_1_C"/>
</dbReference>
<dbReference type="InterPro" id="IPR044814">
    <property type="entry name" value="Terpene_cyclase_plant_C1"/>
</dbReference>
<dbReference type="InterPro" id="IPR001906">
    <property type="entry name" value="Terpene_synth_N"/>
</dbReference>
<dbReference type="InterPro" id="IPR036965">
    <property type="entry name" value="Terpene_synth_N_sf"/>
</dbReference>
<dbReference type="InterPro" id="IPR050148">
    <property type="entry name" value="Terpene_synthase-like"/>
</dbReference>
<dbReference type="InterPro" id="IPR005630">
    <property type="entry name" value="Terpene_synthase_metal-bd"/>
</dbReference>
<dbReference type="InterPro" id="IPR008930">
    <property type="entry name" value="Terpenoid_cyclase/PrenylTrfase"/>
</dbReference>
<dbReference type="PANTHER" id="PTHR31225">
    <property type="entry name" value="OS04G0344100 PROTEIN-RELATED"/>
    <property type="match status" value="1"/>
</dbReference>
<dbReference type="PANTHER" id="PTHR31225:SF253">
    <property type="entry name" value="SESQUITERPENE SYNTHASE 31"/>
    <property type="match status" value="1"/>
</dbReference>
<dbReference type="Pfam" id="PF01397">
    <property type="entry name" value="Terpene_synth"/>
    <property type="match status" value="1"/>
</dbReference>
<dbReference type="Pfam" id="PF03936">
    <property type="entry name" value="Terpene_synth_C"/>
    <property type="match status" value="1"/>
</dbReference>
<dbReference type="SFLD" id="SFLDS00005">
    <property type="entry name" value="Isoprenoid_Synthase_Type_I"/>
    <property type="match status" value="1"/>
</dbReference>
<dbReference type="SFLD" id="SFLDG01019">
    <property type="entry name" value="Terpene_Cyclase_Like_1_C_Termi"/>
    <property type="match status" value="1"/>
</dbReference>
<dbReference type="SUPFAM" id="SSF48239">
    <property type="entry name" value="Terpenoid cyclases/Protein prenyltransferases"/>
    <property type="match status" value="1"/>
</dbReference>
<dbReference type="SUPFAM" id="SSF48576">
    <property type="entry name" value="Terpenoid synthases"/>
    <property type="match status" value="1"/>
</dbReference>
<organism>
    <name type="scientific">Lavandula angustifolia</name>
    <name type="common">Lavender</name>
    <dbReference type="NCBI Taxonomy" id="39329"/>
    <lineage>
        <taxon>Eukaryota</taxon>
        <taxon>Viridiplantae</taxon>
        <taxon>Streptophyta</taxon>
        <taxon>Embryophyta</taxon>
        <taxon>Tracheophyta</taxon>
        <taxon>Spermatophyta</taxon>
        <taxon>Magnoliopsida</taxon>
        <taxon>eudicotyledons</taxon>
        <taxon>Gunneridae</taxon>
        <taxon>Pentapetalae</taxon>
        <taxon>asterids</taxon>
        <taxon>lamiids</taxon>
        <taxon>Lamiales</taxon>
        <taxon>Lamiaceae</taxon>
        <taxon>Nepetoideae</taxon>
        <taxon>Ocimeae</taxon>
        <taxon>Lavandulinae</taxon>
        <taxon>Lavandula</taxon>
    </lineage>
</organism>